<organism>
    <name type="scientific">Bacillus subtilis (strain 168)</name>
    <dbReference type="NCBI Taxonomy" id="224308"/>
    <lineage>
        <taxon>Bacteria</taxon>
        <taxon>Bacillati</taxon>
        <taxon>Bacillota</taxon>
        <taxon>Bacilli</taxon>
        <taxon>Bacillales</taxon>
        <taxon>Bacillaceae</taxon>
        <taxon>Bacillus</taxon>
    </lineage>
</organism>
<name>YHEN_BACSU</name>
<sequence>MRQTRGEASPSAVSLAFKFASLAVLCVLLLLMVILGYSNSSTKAKEVTVTTNGQLRDEKESLKLKNDSPDLLIKHLQTKQNMGDKTVYLTFDDGPSAVTTRLLDVLKSADVKATFFMLSPRMNEFKQAVKRAEKEGHALGLHGVTHNNRLFYQTPTSPLKEMQEARDTLQDITGYKTDLVRTPYGSKPSLTASQIRNLEKDGFVYWDWTIDSMDWKYRNSQYVTAVLQQLENMEHSSSSRPNVILMHDLPATVNALPVLINKLKEKGYSFGVLEDTMVPVHE</sequence>
<comment type="subcellular location">
    <subcellularLocation>
        <location evidence="3">Cell membrane</location>
        <topology evidence="3">Single-pass membrane protein</topology>
    </subcellularLocation>
</comment>
<comment type="similarity">
    <text evidence="3">Belongs to the polysaccharide deacetylase family.</text>
</comment>
<gene>
    <name type="primary">yheN</name>
    <name type="ordered locus">BSU09660</name>
</gene>
<reference key="1">
    <citation type="journal article" date="1998" name="Microbiology">
        <title>The 172 kb prkA-addAB region from 83 degrees to 97 degrees of the Bacillus subtilis chromosome contains several dysfunctional genes, the glyB marker, many genes encoding transporter proteins, and the ubiquitous hit gene.</title>
        <authorList>
            <person name="Noback M.A."/>
            <person name="Holsappel S."/>
            <person name="Kiewiet R."/>
            <person name="Terpstra P."/>
            <person name="Wambutt R."/>
            <person name="Wedler H."/>
            <person name="Venema G."/>
            <person name="Bron S."/>
        </authorList>
    </citation>
    <scope>NUCLEOTIDE SEQUENCE [GENOMIC DNA]</scope>
    <source>
        <strain>168</strain>
    </source>
</reference>
<reference key="2">
    <citation type="journal article" date="1997" name="Nature">
        <title>The complete genome sequence of the Gram-positive bacterium Bacillus subtilis.</title>
        <authorList>
            <person name="Kunst F."/>
            <person name="Ogasawara N."/>
            <person name="Moszer I."/>
            <person name="Albertini A.M."/>
            <person name="Alloni G."/>
            <person name="Azevedo V."/>
            <person name="Bertero M.G."/>
            <person name="Bessieres P."/>
            <person name="Bolotin A."/>
            <person name="Borchert S."/>
            <person name="Borriss R."/>
            <person name="Boursier L."/>
            <person name="Brans A."/>
            <person name="Braun M."/>
            <person name="Brignell S.C."/>
            <person name="Bron S."/>
            <person name="Brouillet S."/>
            <person name="Bruschi C.V."/>
            <person name="Caldwell B."/>
            <person name="Capuano V."/>
            <person name="Carter N.M."/>
            <person name="Choi S.-K."/>
            <person name="Codani J.-J."/>
            <person name="Connerton I.F."/>
            <person name="Cummings N.J."/>
            <person name="Daniel R.A."/>
            <person name="Denizot F."/>
            <person name="Devine K.M."/>
            <person name="Duesterhoeft A."/>
            <person name="Ehrlich S.D."/>
            <person name="Emmerson P.T."/>
            <person name="Entian K.-D."/>
            <person name="Errington J."/>
            <person name="Fabret C."/>
            <person name="Ferrari E."/>
            <person name="Foulger D."/>
            <person name="Fritz C."/>
            <person name="Fujita M."/>
            <person name="Fujita Y."/>
            <person name="Fuma S."/>
            <person name="Galizzi A."/>
            <person name="Galleron N."/>
            <person name="Ghim S.-Y."/>
            <person name="Glaser P."/>
            <person name="Goffeau A."/>
            <person name="Golightly E.J."/>
            <person name="Grandi G."/>
            <person name="Guiseppi G."/>
            <person name="Guy B.J."/>
            <person name="Haga K."/>
            <person name="Haiech J."/>
            <person name="Harwood C.R."/>
            <person name="Henaut A."/>
            <person name="Hilbert H."/>
            <person name="Holsappel S."/>
            <person name="Hosono S."/>
            <person name="Hullo M.-F."/>
            <person name="Itaya M."/>
            <person name="Jones L.-M."/>
            <person name="Joris B."/>
            <person name="Karamata D."/>
            <person name="Kasahara Y."/>
            <person name="Klaerr-Blanchard M."/>
            <person name="Klein C."/>
            <person name="Kobayashi Y."/>
            <person name="Koetter P."/>
            <person name="Koningstein G."/>
            <person name="Krogh S."/>
            <person name="Kumano M."/>
            <person name="Kurita K."/>
            <person name="Lapidus A."/>
            <person name="Lardinois S."/>
            <person name="Lauber J."/>
            <person name="Lazarevic V."/>
            <person name="Lee S.-M."/>
            <person name="Levine A."/>
            <person name="Liu H."/>
            <person name="Masuda S."/>
            <person name="Mauel C."/>
            <person name="Medigue C."/>
            <person name="Medina N."/>
            <person name="Mellado R.P."/>
            <person name="Mizuno M."/>
            <person name="Moestl D."/>
            <person name="Nakai S."/>
            <person name="Noback M."/>
            <person name="Noone D."/>
            <person name="O'Reilly M."/>
            <person name="Ogawa K."/>
            <person name="Ogiwara A."/>
            <person name="Oudega B."/>
            <person name="Park S.-H."/>
            <person name="Parro V."/>
            <person name="Pohl T.M."/>
            <person name="Portetelle D."/>
            <person name="Porwollik S."/>
            <person name="Prescott A.M."/>
            <person name="Presecan E."/>
            <person name="Pujic P."/>
            <person name="Purnelle B."/>
            <person name="Rapoport G."/>
            <person name="Rey M."/>
            <person name="Reynolds S."/>
            <person name="Rieger M."/>
            <person name="Rivolta C."/>
            <person name="Rocha E."/>
            <person name="Roche B."/>
            <person name="Rose M."/>
            <person name="Sadaie Y."/>
            <person name="Sato T."/>
            <person name="Scanlan E."/>
            <person name="Schleich S."/>
            <person name="Schroeter R."/>
            <person name="Scoffone F."/>
            <person name="Sekiguchi J."/>
            <person name="Sekowska A."/>
            <person name="Seror S.J."/>
            <person name="Serror P."/>
            <person name="Shin B.-S."/>
            <person name="Soldo B."/>
            <person name="Sorokin A."/>
            <person name="Tacconi E."/>
            <person name="Takagi T."/>
            <person name="Takahashi H."/>
            <person name="Takemaru K."/>
            <person name="Takeuchi M."/>
            <person name="Tamakoshi A."/>
            <person name="Tanaka T."/>
            <person name="Terpstra P."/>
            <person name="Tognoni A."/>
            <person name="Tosato V."/>
            <person name="Uchiyama S."/>
            <person name="Vandenbol M."/>
            <person name="Vannier F."/>
            <person name="Vassarotti A."/>
            <person name="Viari A."/>
            <person name="Wambutt R."/>
            <person name="Wedler E."/>
            <person name="Wedler H."/>
            <person name="Weitzenegger T."/>
            <person name="Winters P."/>
            <person name="Wipat A."/>
            <person name="Yamamoto H."/>
            <person name="Yamane K."/>
            <person name="Yasumoto K."/>
            <person name="Yata K."/>
            <person name="Yoshida K."/>
            <person name="Yoshikawa H.-F."/>
            <person name="Zumstein E."/>
            <person name="Yoshikawa H."/>
            <person name="Danchin A."/>
        </authorList>
    </citation>
    <scope>NUCLEOTIDE SEQUENCE [LARGE SCALE GENOMIC DNA]</scope>
    <source>
        <strain>168</strain>
    </source>
</reference>
<keyword id="KW-1003">Cell membrane</keyword>
<keyword id="KW-0378">Hydrolase</keyword>
<keyword id="KW-0472">Membrane</keyword>
<keyword id="KW-1185">Reference proteome</keyword>
<keyword id="KW-0812">Transmembrane</keyword>
<keyword id="KW-1133">Transmembrane helix</keyword>
<evidence type="ECO:0000255" key="1"/>
<evidence type="ECO:0000255" key="2">
    <source>
        <dbReference type="PROSITE-ProRule" id="PRU01014"/>
    </source>
</evidence>
<evidence type="ECO:0000305" key="3"/>
<protein>
    <recommendedName>
        <fullName>Putative polysaccharide deacetylase YheN</fullName>
        <ecNumber>3.-.-.-</ecNumber>
    </recommendedName>
</protein>
<feature type="chain" id="PRO_0000387989" description="Putative polysaccharide deacetylase YheN">
    <location>
        <begin position="1"/>
        <end position="282"/>
    </location>
</feature>
<feature type="transmembrane region" description="Helical" evidence="1">
    <location>
        <begin position="15"/>
        <end position="35"/>
    </location>
</feature>
<feature type="domain" description="NodB homology" evidence="2">
    <location>
        <begin position="85"/>
        <end position="271"/>
    </location>
</feature>
<accession>O07596</accession>
<accession>Q796W7</accession>
<dbReference type="EC" id="3.-.-.-"/>
<dbReference type="EMBL" id="Y14082">
    <property type="protein sequence ID" value="CAA74511.1"/>
    <property type="molecule type" value="Genomic_DNA"/>
</dbReference>
<dbReference type="EMBL" id="AL009126">
    <property type="protein sequence ID" value="CAB12805.1"/>
    <property type="molecule type" value="Genomic_DNA"/>
</dbReference>
<dbReference type="PIR" id="F69829">
    <property type="entry name" value="F69829"/>
</dbReference>
<dbReference type="RefSeq" id="NP_388847.1">
    <property type="nucleotide sequence ID" value="NC_000964.3"/>
</dbReference>
<dbReference type="RefSeq" id="WP_003245705.1">
    <property type="nucleotide sequence ID" value="NZ_OZ025638.1"/>
</dbReference>
<dbReference type="SMR" id="O07596"/>
<dbReference type="FunCoup" id="O07596">
    <property type="interactions" value="50"/>
</dbReference>
<dbReference type="STRING" id="224308.BSU09660"/>
<dbReference type="PaxDb" id="224308-BSU09660"/>
<dbReference type="EnsemblBacteria" id="CAB12805">
    <property type="protein sequence ID" value="CAB12805"/>
    <property type="gene ID" value="BSU_09660"/>
</dbReference>
<dbReference type="GeneID" id="936280"/>
<dbReference type="KEGG" id="bsu:BSU09660"/>
<dbReference type="PATRIC" id="fig|224308.179.peg.1039"/>
<dbReference type="eggNOG" id="COG0726">
    <property type="taxonomic scope" value="Bacteria"/>
</dbReference>
<dbReference type="InParanoid" id="O07596"/>
<dbReference type="OrthoDB" id="258610at2"/>
<dbReference type="PhylomeDB" id="O07596"/>
<dbReference type="BioCyc" id="BSUB:BSU09660-MONOMER"/>
<dbReference type="Proteomes" id="UP000001570">
    <property type="component" value="Chromosome"/>
</dbReference>
<dbReference type="GO" id="GO:0005886">
    <property type="term" value="C:plasma membrane"/>
    <property type="evidence" value="ECO:0007669"/>
    <property type="project" value="UniProtKB-SubCell"/>
</dbReference>
<dbReference type="GO" id="GO:0016810">
    <property type="term" value="F:hydrolase activity, acting on carbon-nitrogen (but not peptide) bonds"/>
    <property type="evidence" value="ECO:0007669"/>
    <property type="project" value="InterPro"/>
</dbReference>
<dbReference type="GO" id="GO:0005975">
    <property type="term" value="P:carbohydrate metabolic process"/>
    <property type="evidence" value="ECO:0007669"/>
    <property type="project" value="InterPro"/>
</dbReference>
<dbReference type="CDD" id="cd10944">
    <property type="entry name" value="CE4_SmPgdA_like"/>
    <property type="match status" value="1"/>
</dbReference>
<dbReference type="Gene3D" id="3.20.20.370">
    <property type="entry name" value="Glycoside hydrolase/deacetylase"/>
    <property type="match status" value="1"/>
</dbReference>
<dbReference type="InterPro" id="IPR011330">
    <property type="entry name" value="Glyco_hydro/deAcase_b/a-brl"/>
</dbReference>
<dbReference type="InterPro" id="IPR002509">
    <property type="entry name" value="NODB_dom"/>
</dbReference>
<dbReference type="InterPro" id="IPR050248">
    <property type="entry name" value="Polysacc_deacetylase_ArnD"/>
</dbReference>
<dbReference type="PANTHER" id="PTHR10587">
    <property type="entry name" value="GLYCOSYL TRANSFERASE-RELATED"/>
    <property type="match status" value="1"/>
</dbReference>
<dbReference type="PANTHER" id="PTHR10587:SF125">
    <property type="entry name" value="POLYSACCHARIDE DEACETYLASE YHEN-RELATED"/>
    <property type="match status" value="1"/>
</dbReference>
<dbReference type="Pfam" id="PF01522">
    <property type="entry name" value="Polysacc_deac_1"/>
    <property type="match status" value="1"/>
</dbReference>
<dbReference type="SUPFAM" id="SSF88713">
    <property type="entry name" value="Glycoside hydrolase/deacetylase"/>
    <property type="match status" value="1"/>
</dbReference>
<dbReference type="PROSITE" id="PS51677">
    <property type="entry name" value="NODB"/>
    <property type="match status" value="1"/>
</dbReference>
<proteinExistence type="inferred from homology"/>